<gene>
    <name evidence="13" type="primary">scd-2</name>
    <name evidence="13" type="ORF">T10H9.2</name>
</gene>
<accession>O76411</accession>
<proteinExistence type="evidence at protein level"/>
<organism evidence="12">
    <name type="scientific">Caenorhabditis elegans</name>
    <dbReference type="NCBI Taxonomy" id="6239"/>
    <lineage>
        <taxon>Eukaryota</taxon>
        <taxon>Metazoa</taxon>
        <taxon>Ecdysozoa</taxon>
        <taxon>Nematoda</taxon>
        <taxon>Chromadorea</taxon>
        <taxon>Rhabditida</taxon>
        <taxon>Rhabditina</taxon>
        <taxon>Rhabditomorpha</taxon>
        <taxon>Rhabditoidea</taxon>
        <taxon>Rhabditidae</taxon>
        <taxon>Peloderinae</taxon>
        <taxon>Caenorhabditis</taxon>
    </lineage>
</organism>
<reference evidence="12" key="1">
    <citation type="journal article" date="1998" name="Science">
        <title>Genome sequence of the nematode C. elegans: a platform for investigating biology.</title>
        <authorList>
            <consortium name="The C. elegans sequencing consortium"/>
        </authorList>
    </citation>
    <scope>NUCLEOTIDE SEQUENCE [LARGE SCALE GENOMIC DNA]</scope>
    <source>
        <strain evidence="12">Bristol N2</strain>
    </source>
</reference>
<reference evidence="11" key="2">
    <citation type="journal article" date="2000" name="Genetics">
        <title>Suppressors of transforming growth factor-beta pathway mutants in the Caenorhabditis elegans dauer formation pathway.</title>
        <authorList>
            <person name="Inoue T."/>
            <person name="Thomas J.H."/>
        </authorList>
    </citation>
    <scope>FUNCTION</scope>
    <scope>MUTAGENESIS OF GLY-1174</scope>
</reference>
<reference evidence="11" key="3">
    <citation type="journal article" date="2004" name="Nature">
        <title>An SCF-like ubiquitin ligase complex that controls presynaptic differentiation.</title>
        <authorList>
            <person name="Liao E.H."/>
            <person name="Hung W."/>
            <person name="Abrams B."/>
            <person name="Zhen M."/>
        </authorList>
    </citation>
    <scope>INTERACTION WITH FSN-1</scope>
</reference>
<reference evidence="11" key="4">
    <citation type="journal article" date="2008" name="Curr. Biol.">
        <title>C. elegans anaplastic lymphoma kinase ortholog SCD-2 controls dauer formation by modulating TGF-beta signaling.</title>
        <authorList>
            <person name="Reiner D.J."/>
            <person name="Ailion M."/>
            <person name="Thomas J.H."/>
            <person name="Meyer B.J."/>
        </authorList>
    </citation>
    <scope>FUNCTION</scope>
    <scope>MUTAGENESIS OF GLY-1174</scope>
</reference>
<reference evidence="11" key="5">
    <citation type="journal article" date="2011" name="J. Neurosci.">
        <title>Behavioral choice between conflicting alternatives is regulated by a receptor guanylyl cyclase, GCY-28, and a receptor tyrosine kinase, SCD-2, in AIA interneurons of Caenorhabditis elegans.</title>
        <authorList>
            <person name="Shinkai Y."/>
            <person name="Yamamoto Y."/>
            <person name="Fujiwara M."/>
            <person name="Tabata T."/>
            <person name="Murayama T."/>
            <person name="Hirotsu T."/>
            <person name="Ikeda D.D."/>
            <person name="Tsunozaki M."/>
            <person name="Iino Y."/>
            <person name="Bargmann C.I."/>
            <person name="Katsura I."/>
            <person name="Ishihara T."/>
        </authorList>
    </citation>
    <scope>FUNCTION</scope>
    <scope>TISSUE SPECIFICITY</scope>
    <scope>MUTAGENESIS OF GLY-1174</scope>
</reference>
<reference key="6">
    <citation type="journal article" date="2017" name="J. Neurosci.">
        <title>Multiple Signaling Pathways Coordinately Regulate Forgetting of Olfactory Adaptation through Control of Sensory Responses in Caenorhabditis elegans.</title>
        <authorList>
            <person name="Kitazono T."/>
            <person name="Hara-Kuge S."/>
            <person name="Matsuda O."/>
            <person name="Inoue A."/>
            <person name="Fujiwara M."/>
            <person name="Ishihara T."/>
        </authorList>
    </citation>
    <scope>FUNCTION</scope>
    <scope>MUTAGENESIS OF ALA-1001 AND GLY-1174</scope>
</reference>
<comment type="function">
    <text evidence="6 8 9 10">Probable tyrosine-protein kinase receptor which regulates the dauer/non-dauer developmental decision probably by controlling daf-3 transcriptional activity in parallel or together with the TGF-beta pathway (PubMed:11063683, PubMed:18674914). Regulates integration of conflicting sensory cues in AIA interneurons (PubMed:21414922). May act as a receptor for hen-1 (PubMed:18674914, PubMed:21414922). In AWA neurons, together with hen-1, plays a role in regulating olfactory adaptation by controlling the forgetting sensory responses to odorants such as diacetyl (PubMed:28924007).</text>
</comment>
<comment type="catalytic activity">
    <reaction evidence="11">
        <text>L-tyrosyl-[protein] + ATP = O-phospho-L-tyrosyl-[protein] + ADP + H(+)</text>
        <dbReference type="Rhea" id="RHEA:10596"/>
        <dbReference type="Rhea" id="RHEA-COMP:10136"/>
        <dbReference type="Rhea" id="RHEA-COMP:20101"/>
        <dbReference type="ChEBI" id="CHEBI:15378"/>
        <dbReference type="ChEBI" id="CHEBI:30616"/>
        <dbReference type="ChEBI" id="CHEBI:46858"/>
        <dbReference type="ChEBI" id="CHEBI:61978"/>
        <dbReference type="ChEBI" id="CHEBI:456216"/>
        <dbReference type="EC" id="2.7.10.1"/>
    </reaction>
</comment>
<comment type="subunit">
    <text evidence="7">Interacts (via cytoplasmic domain) with fsn-1 (via SPRY domain).</text>
</comment>
<comment type="subcellular location">
    <subcellularLocation>
        <location evidence="11">Cell membrane</location>
        <topology evidence="11">Single-pass type I membrane protein</topology>
    </subcellularLocation>
</comment>
<comment type="tissue specificity">
    <text evidence="9">Expressed in AIA sensory neurons.</text>
</comment>
<comment type="similarity">
    <text evidence="11">Belongs to the protein kinase superfamily. Tyr protein kinase family. Insulin receptor subfamily.</text>
</comment>
<sequence>MRKRRLWWFVVLFRVTLVGAILPNETFDVRRYYADRFLIEDEENGSSRSYYISAESKAKAAEQFALLAPNCSLTSDIQENTCNETSSFCDHRVDSTYKTYHYEQEKCNCFIETCDEETNSTELMVLYPDCYCGKREKHCDLSKEKCHWTPDSDHDDLKFEVFESSNKVLFDYMLQAGSEKANLKMNKVSMVSKFFRQSGFNCSLRFMHHFTHQSSTSRLVVRSILQSGEKKNLYEHWLKPASVFWVPVQVAIGSYAEPFKISIDCETGFPPKKKKNKPFTCSIADIYFENCGEIRDPIEQCSRGDQFLCSISANTRCLQNAQCDSRIDCDDESDEMDCGNINGTMCDFNGQDYCNSWYQVTNVTDYHERLSEPTTVAPLNKLNEVPLHLFRLQSPSAKIKEAMRGSGNMLVFDHKPNPLTRRTSALVSPELPRTNPEAYDEKSPLFKSCKLRFYLCSRTYSKVWQISVISKGINPMESGRTIIYEAGYTLIPKENCTWERVFVNIPRQNAGFRIGIFVTNYFPGSEEYVAIDNLSFSPTCFERDINQSTWDIPDLFINTCGASGFEQPQNCDHNRELDGQTGHFLKEDGTQQWTVPVTGFYRMEICGAGGGSNSKASGDTGDCVTLQVHLIENLSLRMLIGQMGESPCFTEHDDELRPSSCSKISHNYVYDGKRGAAGGGATLLTVEKDLWNVVAGGGAGASWDGFDMEVGYGASAIHVKPDQRCNETCKAVSHTDFIVERRDNRCPGEKGESTVFGGFGGGGNSCGMLGGSGAGYQAGNPFGKSRARSGSSNVSIDFSKSPIYYQSERLDEGYIKIAFCRKRCEPPTVCRFRKDYFEEEYCGCPDGSNVTDTEEACAFPLVCPSSSTNQYRNFTYEPFCLCNNGKEIYDVYNDTCEEIQIWTLYNITFLIFAALTIIGALFVVYHYRNREKQMKQEILDLTQMKSPDYLYDDIYFGRTTRKAALDSLPSISRDSIERGRVLGRGNFGEVYYGEYSGVKLAVKMISRTFSASQASQSDFCNEALCMGTFVDENVVRLIGIDFEKVPYMIALEYMEGGDLLSFVKECRPNQVSLNPFQLAMSDLIKICCDVAAGCKCLETFGYVHRDIAARNILLTTRGPQRVAKIADFGMAKEITYGTEYYRINGRTMMPIKWTPPEAFIDGVFTTKSDIWSFGVLCWEVFSLGVVPYPNRRNEEVMLMLTEGARLEYPYGIPTRVYQLMRDCWKTAAADRPKFVDVVEIFQDIQDDPASVGMPFPIHPAVRATFAHSQSTPVSVETPMTAMTEISLNSTFTDASTVKVSAQQDMQDRIQLHELMLTREHPYTSELTSYVVNSIRKDLARVQYENGLTSVPQPEYLSPENNDESVQLIPQSNTVTDQTPPTSLIDLNRLGVQNTGPTLHRPDSLNFNDPYSSVPLLECQTR</sequence>
<protein>
    <recommendedName>
        <fullName evidence="11">ALK tyrosine kinase receptor homolog scd-2</fullName>
        <ecNumber evidence="11">2.7.10.1</ecNumber>
    </recommendedName>
    <alternativeName>
        <fullName evidence="13">Suppressor of constitutive dauer formation protein 2</fullName>
    </alternativeName>
</protein>
<evidence type="ECO:0000255" key="1"/>
<evidence type="ECO:0000255" key="2">
    <source>
        <dbReference type="PROSITE-ProRule" id="PRU00124"/>
    </source>
</evidence>
<evidence type="ECO:0000255" key="3">
    <source>
        <dbReference type="PROSITE-ProRule" id="PRU00128"/>
    </source>
</evidence>
<evidence type="ECO:0000255" key="4">
    <source>
        <dbReference type="PROSITE-ProRule" id="PRU00159"/>
    </source>
</evidence>
<evidence type="ECO:0000255" key="5">
    <source>
        <dbReference type="PROSITE-ProRule" id="PRU00498"/>
    </source>
</evidence>
<evidence type="ECO:0000269" key="6">
    <source>
    </source>
</evidence>
<evidence type="ECO:0000269" key="7">
    <source>
    </source>
</evidence>
<evidence type="ECO:0000269" key="8">
    <source>
    </source>
</evidence>
<evidence type="ECO:0000269" key="9">
    <source>
    </source>
</evidence>
<evidence type="ECO:0000269" key="10">
    <source>
    </source>
</evidence>
<evidence type="ECO:0000305" key="11"/>
<evidence type="ECO:0000312" key="12">
    <source>
        <dbReference type="Proteomes" id="UP000001940"/>
    </source>
</evidence>
<evidence type="ECO:0000312" key="13">
    <source>
        <dbReference type="WormBase" id="T10H9.2"/>
    </source>
</evidence>
<evidence type="ECO:0007829" key="14">
    <source>
        <dbReference type="PDB" id="7LIR"/>
    </source>
</evidence>
<name>SCD2_CAEEL</name>
<keyword id="KW-0002">3D-structure</keyword>
<keyword id="KW-0067">ATP-binding</keyword>
<keyword id="KW-1003">Cell membrane</keyword>
<keyword id="KW-0145">Chemotaxis</keyword>
<keyword id="KW-1015">Disulfide bond</keyword>
<keyword id="KW-0325">Glycoprotein</keyword>
<keyword id="KW-0418">Kinase</keyword>
<keyword id="KW-0472">Membrane</keyword>
<keyword id="KW-0547">Nucleotide-binding</keyword>
<keyword id="KW-0675">Receptor</keyword>
<keyword id="KW-1185">Reference proteome</keyword>
<keyword id="KW-0732">Signal</keyword>
<keyword id="KW-0808">Transferase</keyword>
<keyword id="KW-0812">Transmembrane</keyword>
<keyword id="KW-1133">Transmembrane helix</keyword>
<keyword id="KW-0829">Tyrosine-protein kinase</keyword>
<dbReference type="EC" id="2.7.10.1" evidence="11"/>
<dbReference type="EMBL" id="BX284605">
    <property type="protein sequence ID" value="CCD71218.1"/>
    <property type="molecule type" value="Genomic_DNA"/>
</dbReference>
<dbReference type="RefSeq" id="NP_504685.3">
    <property type="nucleotide sequence ID" value="NM_072284.4"/>
</dbReference>
<dbReference type="PDB" id="7LIR">
    <property type="method" value="X-ray"/>
    <property type="resolution" value="2.60 A"/>
    <property type="chains" value="A/B=549-898"/>
</dbReference>
<dbReference type="PDBsum" id="7LIR"/>
<dbReference type="SMR" id="O76411"/>
<dbReference type="FunCoup" id="O76411">
    <property type="interactions" value="139"/>
</dbReference>
<dbReference type="IntAct" id="O76411">
    <property type="interactions" value="1"/>
</dbReference>
<dbReference type="STRING" id="6239.T10H9.2.1"/>
<dbReference type="GlyCosmos" id="O76411">
    <property type="glycosylation" value="17 sites, No reported glycans"/>
</dbReference>
<dbReference type="PaxDb" id="6239-T10H9.2"/>
<dbReference type="PeptideAtlas" id="O76411"/>
<dbReference type="EnsemblMetazoa" id="T10H9.2.1">
    <property type="protein sequence ID" value="T10H9.2.1"/>
    <property type="gene ID" value="WBGene00004740"/>
</dbReference>
<dbReference type="GeneID" id="179054"/>
<dbReference type="KEGG" id="cel:CELE_T10H9.2"/>
<dbReference type="UCSC" id="T10H9.2">
    <property type="organism name" value="c. elegans"/>
</dbReference>
<dbReference type="AGR" id="WB:WBGene00004740"/>
<dbReference type="CTD" id="179054"/>
<dbReference type="WormBase" id="T10H9.2">
    <property type="protein sequence ID" value="CE45495"/>
    <property type="gene ID" value="WBGene00004740"/>
    <property type="gene designation" value="scd-2"/>
</dbReference>
<dbReference type="eggNOG" id="KOG1095">
    <property type="taxonomic scope" value="Eukaryota"/>
</dbReference>
<dbReference type="GeneTree" id="ENSGT00940000174242"/>
<dbReference type="HOGENOM" id="CLU_253074_0_0_1"/>
<dbReference type="InParanoid" id="O76411"/>
<dbReference type="OMA" id="NTECYID"/>
<dbReference type="OrthoDB" id="73209at2759"/>
<dbReference type="PhylomeDB" id="O76411"/>
<dbReference type="PRO" id="PR:O76411"/>
<dbReference type="Proteomes" id="UP000001940">
    <property type="component" value="Chromosome V"/>
</dbReference>
<dbReference type="Bgee" id="WBGene00004740">
    <property type="expression patterns" value="Expressed in larva and 2 other cell types or tissues"/>
</dbReference>
<dbReference type="GO" id="GO:0005886">
    <property type="term" value="C:plasma membrane"/>
    <property type="evidence" value="ECO:0007669"/>
    <property type="project" value="UniProtKB-SubCell"/>
</dbReference>
<dbReference type="GO" id="GO:0005524">
    <property type="term" value="F:ATP binding"/>
    <property type="evidence" value="ECO:0007669"/>
    <property type="project" value="UniProtKB-KW"/>
</dbReference>
<dbReference type="GO" id="GO:0004714">
    <property type="term" value="F:transmembrane receptor protein tyrosine kinase activity"/>
    <property type="evidence" value="ECO:0007669"/>
    <property type="project" value="UniProtKB-EC"/>
</dbReference>
<dbReference type="GO" id="GO:0006935">
    <property type="term" value="P:chemotaxis"/>
    <property type="evidence" value="ECO:0007669"/>
    <property type="project" value="UniProtKB-KW"/>
</dbReference>
<dbReference type="GO" id="GO:0040024">
    <property type="term" value="P:dauer larval development"/>
    <property type="evidence" value="ECO:0000316"/>
    <property type="project" value="WormBase"/>
</dbReference>
<dbReference type="GO" id="GO:0045664">
    <property type="term" value="P:regulation of neuron differentiation"/>
    <property type="evidence" value="ECO:0000318"/>
    <property type="project" value="GO_Central"/>
</dbReference>
<dbReference type="GO" id="GO:0007606">
    <property type="term" value="P:sensory perception of chemical stimulus"/>
    <property type="evidence" value="ECO:0000315"/>
    <property type="project" value="UniProtKB"/>
</dbReference>
<dbReference type="GO" id="GO:0050893">
    <property type="term" value="P:sensory processing"/>
    <property type="evidence" value="ECO:0000315"/>
    <property type="project" value="UniProtKB"/>
</dbReference>
<dbReference type="CDD" id="cd00112">
    <property type="entry name" value="LDLa"/>
    <property type="match status" value="1"/>
</dbReference>
<dbReference type="FunFam" id="1.10.510.10:FF:001727">
    <property type="entry name" value="Tyrosine-protein kinase receptor svh-2"/>
    <property type="match status" value="1"/>
</dbReference>
<dbReference type="Gene3D" id="2.60.120.200">
    <property type="match status" value="2"/>
</dbReference>
<dbReference type="Gene3D" id="1.10.510.10">
    <property type="entry name" value="Transferase(Phosphotransferase) domain 1"/>
    <property type="match status" value="1"/>
</dbReference>
<dbReference type="InterPro" id="IPR055163">
    <property type="entry name" value="ALK/LTK-like_GRD"/>
</dbReference>
<dbReference type="InterPro" id="IPR013320">
    <property type="entry name" value="ConA-like_dom_sf"/>
</dbReference>
<dbReference type="InterPro" id="IPR011009">
    <property type="entry name" value="Kinase-like_dom_sf"/>
</dbReference>
<dbReference type="InterPro" id="IPR002172">
    <property type="entry name" value="LDrepeatLR_classA_rpt"/>
</dbReference>
<dbReference type="InterPro" id="IPR000998">
    <property type="entry name" value="MAM_dom"/>
</dbReference>
<dbReference type="InterPro" id="IPR000719">
    <property type="entry name" value="Prot_kinase_dom"/>
</dbReference>
<dbReference type="InterPro" id="IPR017441">
    <property type="entry name" value="Protein_kinase_ATP_BS"/>
</dbReference>
<dbReference type="InterPro" id="IPR050122">
    <property type="entry name" value="RTK"/>
</dbReference>
<dbReference type="InterPro" id="IPR001245">
    <property type="entry name" value="Ser-Thr/Tyr_kinase_cat_dom"/>
</dbReference>
<dbReference type="InterPro" id="IPR008266">
    <property type="entry name" value="Tyr_kinase_AS"/>
</dbReference>
<dbReference type="InterPro" id="IPR020635">
    <property type="entry name" value="Tyr_kinase_cat_dom"/>
</dbReference>
<dbReference type="PANTHER" id="PTHR24416:SF604">
    <property type="entry name" value="RECEPTOR PROTEIN-TYROSINE KINASE"/>
    <property type="match status" value="1"/>
</dbReference>
<dbReference type="PANTHER" id="PTHR24416">
    <property type="entry name" value="TYROSINE-PROTEIN KINASE RECEPTOR"/>
    <property type="match status" value="1"/>
</dbReference>
<dbReference type="Pfam" id="PF12810">
    <property type="entry name" value="ALK_LTK_GRD"/>
    <property type="match status" value="1"/>
</dbReference>
<dbReference type="Pfam" id="PF07714">
    <property type="entry name" value="PK_Tyr_Ser-Thr"/>
    <property type="match status" value="1"/>
</dbReference>
<dbReference type="PRINTS" id="PR00109">
    <property type="entry name" value="TYRKINASE"/>
</dbReference>
<dbReference type="SMART" id="SM00192">
    <property type="entry name" value="LDLa"/>
    <property type="match status" value="1"/>
</dbReference>
<dbReference type="SMART" id="SM00219">
    <property type="entry name" value="TyrKc"/>
    <property type="match status" value="1"/>
</dbReference>
<dbReference type="SUPFAM" id="SSF49899">
    <property type="entry name" value="Concanavalin A-like lectins/glucanases"/>
    <property type="match status" value="1"/>
</dbReference>
<dbReference type="SUPFAM" id="SSF56112">
    <property type="entry name" value="Protein kinase-like (PK-like)"/>
    <property type="match status" value="1"/>
</dbReference>
<dbReference type="PROSITE" id="PS50068">
    <property type="entry name" value="LDLRA_2"/>
    <property type="match status" value="1"/>
</dbReference>
<dbReference type="PROSITE" id="PS50060">
    <property type="entry name" value="MAM_2"/>
    <property type="match status" value="1"/>
</dbReference>
<dbReference type="PROSITE" id="PS00107">
    <property type="entry name" value="PROTEIN_KINASE_ATP"/>
    <property type="match status" value="1"/>
</dbReference>
<dbReference type="PROSITE" id="PS50011">
    <property type="entry name" value="PROTEIN_KINASE_DOM"/>
    <property type="match status" value="1"/>
</dbReference>
<dbReference type="PROSITE" id="PS00109">
    <property type="entry name" value="PROTEIN_KINASE_TYR"/>
    <property type="match status" value="1"/>
</dbReference>
<feature type="signal peptide" evidence="1">
    <location>
        <begin position="1"/>
        <end position="20"/>
    </location>
</feature>
<feature type="chain" id="PRO_0000434037" description="ALK tyrosine kinase receptor homolog scd-2" evidence="11">
    <location>
        <begin position="21"/>
        <end position="1421"/>
    </location>
</feature>
<feature type="topological domain" description="Extracellular" evidence="1">
    <location>
        <begin position="21"/>
        <end position="903"/>
    </location>
</feature>
<feature type="transmembrane region" description="Helical" evidence="1">
    <location>
        <begin position="904"/>
        <end position="924"/>
    </location>
</feature>
<feature type="topological domain" description="Cytoplasmic" evidence="1">
    <location>
        <begin position="925"/>
        <end position="1421"/>
    </location>
</feature>
<feature type="domain" description="LDL-receptor class A" evidence="2">
    <location>
        <begin position="300"/>
        <end position="338"/>
    </location>
</feature>
<feature type="domain" description="MAM" evidence="3">
    <location>
        <begin position="339"/>
        <end position="542"/>
    </location>
</feature>
<feature type="domain" description="Protein kinase" evidence="4">
    <location>
        <begin position="976"/>
        <end position="1261"/>
    </location>
</feature>
<feature type="active site" description="Proton acceptor" evidence="4">
    <location>
        <position position="1106"/>
    </location>
</feature>
<feature type="binding site" evidence="4">
    <location>
        <begin position="982"/>
        <end position="990"/>
    </location>
    <ligand>
        <name>ATP</name>
        <dbReference type="ChEBI" id="CHEBI:30616"/>
    </ligand>
</feature>
<feature type="binding site" evidence="4">
    <location>
        <position position="1003"/>
    </location>
    <ligand>
        <name>ATP</name>
        <dbReference type="ChEBI" id="CHEBI:30616"/>
    </ligand>
</feature>
<feature type="glycosylation site" description="N-linked (GlcNAc...) asparagine" evidence="5">
    <location>
        <position position="24"/>
    </location>
</feature>
<feature type="glycosylation site" description="N-linked (GlcNAc...) asparagine" evidence="5">
    <location>
        <position position="44"/>
    </location>
</feature>
<feature type="glycosylation site" description="N-linked (GlcNAc...) asparagine" evidence="5">
    <location>
        <position position="70"/>
    </location>
</feature>
<feature type="glycosylation site" description="N-linked (GlcNAc...) asparagine" evidence="5">
    <location>
        <position position="83"/>
    </location>
</feature>
<feature type="glycosylation site" description="N-linked (GlcNAc...) asparagine" evidence="5">
    <location>
        <position position="119"/>
    </location>
</feature>
<feature type="glycosylation site" description="N-linked (GlcNAc...) asparagine" evidence="5">
    <location>
        <position position="201"/>
    </location>
</feature>
<feature type="glycosylation site" description="N-linked (GlcNAc...) asparagine" evidence="5">
    <location>
        <position position="342"/>
    </location>
</feature>
<feature type="glycosylation site" description="N-linked (GlcNAc...) asparagine" evidence="5">
    <location>
        <position position="362"/>
    </location>
</feature>
<feature type="glycosylation site" description="N-linked (GlcNAc...) asparagine" evidence="5">
    <location>
        <position position="495"/>
    </location>
</feature>
<feature type="glycosylation site" description="N-linked (GlcNAc...) asparagine" evidence="5">
    <location>
        <position position="533"/>
    </location>
</feature>
<feature type="glycosylation site" description="N-linked (GlcNAc...) asparagine" evidence="5">
    <location>
        <position position="546"/>
    </location>
</feature>
<feature type="glycosylation site" description="N-linked (GlcNAc...) asparagine" evidence="5">
    <location>
        <position position="633"/>
    </location>
</feature>
<feature type="glycosylation site" description="N-linked (GlcNAc...) asparagine" evidence="5">
    <location>
        <position position="726"/>
    </location>
</feature>
<feature type="glycosylation site" description="N-linked (GlcNAc...) asparagine" evidence="5">
    <location>
        <position position="793"/>
    </location>
</feature>
<feature type="glycosylation site" description="N-linked (GlcNAc...) asparagine" evidence="5">
    <location>
        <position position="849"/>
    </location>
</feature>
<feature type="glycosylation site" description="N-linked (GlcNAc...) asparagine" evidence="5">
    <location>
        <position position="873"/>
    </location>
</feature>
<feature type="glycosylation site" description="N-linked (GlcNAc...) asparagine" evidence="5">
    <location>
        <position position="893"/>
    </location>
</feature>
<feature type="disulfide bond" evidence="2">
    <location>
        <begin position="301"/>
        <end position="317"/>
    </location>
</feature>
<feature type="disulfide bond" evidence="2">
    <location>
        <begin position="309"/>
        <end position="329"/>
    </location>
</feature>
<feature type="disulfide bond" evidence="2">
    <location>
        <begin position="323"/>
        <end position="338"/>
    </location>
</feature>
<feature type="mutagenesis site" description="In qj141; defective olfactory adaptation resulting in impaired forgetting sensory responses to the odorant diacetyl." evidence="10">
    <original>A</original>
    <variation>T</variation>
    <location>
        <position position="1001"/>
    </location>
</feature>
<feature type="mutagenesis site" description="In sa249; moderate decrease in dauer formation. Partially suppresses constitutive dauer formation in mutants of the TGF-beta pathway. Defect in sensory integration when confronted to two opposing environmental chemicals. Defective olfactory adaptation resulting in impaired forgetting sensory responses to the odorant diacetyl." evidence="6 8 9 10">
    <original>G</original>
    <variation>E</variation>
    <location>
        <position position="1174"/>
    </location>
</feature>
<feature type="strand" evidence="14">
    <location>
        <begin position="555"/>
        <end position="557"/>
    </location>
</feature>
<feature type="strand" evidence="14">
    <location>
        <begin position="564"/>
        <end position="566"/>
    </location>
</feature>
<feature type="strand" evidence="14">
    <location>
        <begin position="583"/>
        <end position="585"/>
    </location>
</feature>
<feature type="strand" evidence="14">
    <location>
        <begin position="591"/>
        <end position="594"/>
    </location>
</feature>
<feature type="strand" evidence="14">
    <location>
        <begin position="597"/>
        <end position="606"/>
    </location>
</feature>
<feature type="strand" evidence="14">
    <location>
        <begin position="622"/>
        <end position="630"/>
    </location>
</feature>
<feature type="strand" evidence="14">
    <location>
        <begin position="635"/>
        <end position="639"/>
    </location>
</feature>
<feature type="strand" evidence="14">
    <location>
        <begin position="646"/>
        <end position="652"/>
    </location>
</feature>
<feature type="strand" evidence="14">
    <location>
        <begin position="655"/>
        <end position="661"/>
    </location>
</feature>
<feature type="strand" evidence="14">
    <location>
        <begin position="682"/>
        <end position="690"/>
    </location>
</feature>
<feature type="strand" evidence="14">
    <location>
        <begin position="692"/>
        <end position="695"/>
    </location>
</feature>
<feature type="strand" evidence="14">
    <location>
        <begin position="715"/>
        <end position="717"/>
    </location>
</feature>
<feature type="helix" evidence="14">
    <location>
        <begin position="727"/>
        <end position="732"/>
    </location>
</feature>
<feature type="strand" evidence="14">
    <location>
        <begin position="735"/>
        <end position="738"/>
    </location>
</feature>
<feature type="turn" evidence="14">
    <location>
        <begin position="741"/>
        <end position="744"/>
    </location>
</feature>
<feature type="helix" evidence="14">
    <location>
        <begin position="748"/>
        <end position="753"/>
    </location>
</feature>
<feature type="turn" evidence="14">
    <location>
        <begin position="759"/>
        <end position="761"/>
    </location>
</feature>
<feature type="strand" evidence="14">
    <location>
        <begin position="765"/>
        <end position="769"/>
    </location>
</feature>
<feature type="strand" evidence="14">
    <location>
        <begin position="775"/>
        <end position="777"/>
    </location>
</feature>
<feature type="helix" evidence="14">
    <location>
        <begin position="785"/>
        <end position="788"/>
    </location>
</feature>
<feature type="turn" evidence="14">
    <location>
        <begin position="796"/>
        <end position="798"/>
    </location>
</feature>
<feature type="strand" evidence="14">
    <location>
        <begin position="803"/>
        <end position="806"/>
    </location>
</feature>
<feature type="strand" evidence="14">
    <location>
        <begin position="814"/>
        <end position="819"/>
    </location>
</feature>
<feature type="strand" evidence="14">
    <location>
        <begin position="829"/>
        <end position="832"/>
    </location>
</feature>
<feature type="helix" evidence="14">
    <location>
        <begin position="835"/>
        <end position="837"/>
    </location>
</feature>
<feature type="strand" evidence="14">
    <location>
        <begin position="840"/>
        <end position="843"/>
    </location>
</feature>
<feature type="helix" evidence="14">
    <location>
        <begin position="850"/>
        <end position="852"/>
    </location>
</feature>
<feature type="strand" evidence="14">
    <location>
        <begin position="853"/>
        <end position="855"/>
    </location>
</feature>
<feature type="strand" evidence="14">
    <location>
        <begin position="865"/>
        <end position="871"/>
    </location>
</feature>
<feature type="turn" evidence="14">
    <location>
        <begin position="873"/>
        <end position="875"/>
    </location>
</feature>
<feature type="strand" evidence="14">
    <location>
        <begin position="878"/>
        <end position="882"/>
    </location>
</feature>